<dbReference type="EMBL" id="MULK01015774">
    <property type="status" value="NOT_ANNOTATED_CDS"/>
    <property type="molecule type" value="Genomic_DNA"/>
</dbReference>
<dbReference type="SMR" id="P0DUX5"/>
<dbReference type="OrthoDB" id="8941712at2759"/>
<dbReference type="GO" id="GO:0034364">
    <property type="term" value="C:high-density lipoprotein particle"/>
    <property type="evidence" value="ECO:0007669"/>
    <property type="project" value="TreeGrafter"/>
</dbReference>
<dbReference type="GO" id="GO:0034361">
    <property type="term" value="C:very-low-density lipoprotein particle"/>
    <property type="evidence" value="ECO:0007669"/>
    <property type="project" value="UniProtKB-KW"/>
</dbReference>
<dbReference type="GO" id="GO:0005504">
    <property type="term" value="F:fatty acid binding"/>
    <property type="evidence" value="ECO:0007669"/>
    <property type="project" value="TreeGrafter"/>
</dbReference>
<dbReference type="GO" id="GO:0004859">
    <property type="term" value="F:phospholipase inhibitor activity"/>
    <property type="evidence" value="ECO:0007669"/>
    <property type="project" value="TreeGrafter"/>
</dbReference>
<dbReference type="GO" id="GO:0006869">
    <property type="term" value="P:lipid transport"/>
    <property type="evidence" value="ECO:0007669"/>
    <property type="project" value="UniProtKB-KW"/>
</dbReference>
<dbReference type="GO" id="GO:0042157">
    <property type="term" value="P:lipoprotein metabolic process"/>
    <property type="evidence" value="ECO:0007669"/>
    <property type="project" value="InterPro"/>
</dbReference>
<dbReference type="GO" id="GO:0032375">
    <property type="term" value="P:negative regulation of cholesterol transport"/>
    <property type="evidence" value="ECO:0007669"/>
    <property type="project" value="TreeGrafter"/>
</dbReference>
<dbReference type="GO" id="GO:0050995">
    <property type="term" value="P:negative regulation of lipid catabolic process"/>
    <property type="evidence" value="ECO:0007669"/>
    <property type="project" value="TreeGrafter"/>
</dbReference>
<dbReference type="GO" id="GO:0010916">
    <property type="term" value="P:negative regulation of very-low-density lipoprotein particle clearance"/>
    <property type="evidence" value="ECO:0007669"/>
    <property type="project" value="TreeGrafter"/>
</dbReference>
<dbReference type="GO" id="GO:0006641">
    <property type="term" value="P:triglyceride metabolic process"/>
    <property type="evidence" value="ECO:0007669"/>
    <property type="project" value="TreeGrafter"/>
</dbReference>
<dbReference type="GO" id="GO:0034447">
    <property type="term" value="P:very-low-density lipoprotein particle clearance"/>
    <property type="evidence" value="ECO:0007669"/>
    <property type="project" value="TreeGrafter"/>
</dbReference>
<dbReference type="Gene3D" id="4.10.260.30">
    <property type="entry name" value="Apolipoprotein C-I"/>
    <property type="match status" value="1"/>
</dbReference>
<dbReference type="InterPro" id="IPR043081">
    <property type="entry name" value="ApoC-1_sf"/>
</dbReference>
<dbReference type="InterPro" id="IPR006781">
    <property type="entry name" value="ApoC-I"/>
</dbReference>
<dbReference type="PANTHER" id="PTHR16565">
    <property type="entry name" value="APOLIPOPROTEIN C-I"/>
    <property type="match status" value="1"/>
</dbReference>
<dbReference type="PANTHER" id="PTHR16565:SF2">
    <property type="entry name" value="APOLIPOPROTEIN C-I"/>
    <property type="match status" value="1"/>
</dbReference>
<dbReference type="Pfam" id="PF04691">
    <property type="entry name" value="ApoC-I"/>
    <property type="match status" value="1"/>
</dbReference>
<sequence length="88" mass="9894">MRLFISLPVLIVVLAMALEGPAPAQATPDLSSTFENLPDKLKEFGNTLEDKARAAIEHIKQKEFLTKTRTWISETFGKMKEKIKTTFA</sequence>
<evidence type="ECO:0000250" key="1">
    <source>
        <dbReference type="UniProtKB" id="P02654"/>
    </source>
</evidence>
<evidence type="ECO:0000250" key="2">
    <source>
        <dbReference type="UniProtKB" id="P33047"/>
    </source>
</evidence>
<evidence type="ECO:0000250" key="3">
    <source>
        <dbReference type="UniProtKB" id="P34928"/>
    </source>
</evidence>
<evidence type="ECO:0000250" key="4">
    <source>
        <dbReference type="UniProtKB" id="P86336"/>
    </source>
</evidence>
<evidence type="ECO:0000255" key="5"/>
<evidence type="ECO:0000305" key="6"/>
<gene>
    <name type="primary">APOC1</name>
</gene>
<name>APOC1_MYOGA</name>
<organism>
    <name type="scientific">Myodes glareolus</name>
    <name type="common">Bank vole</name>
    <name type="synonym">Clethrionomys glareolus</name>
    <dbReference type="NCBI Taxonomy" id="447135"/>
    <lineage>
        <taxon>Eukaryota</taxon>
        <taxon>Metazoa</taxon>
        <taxon>Chordata</taxon>
        <taxon>Craniata</taxon>
        <taxon>Vertebrata</taxon>
        <taxon>Euteleostomi</taxon>
        <taxon>Mammalia</taxon>
        <taxon>Eutheria</taxon>
        <taxon>Euarchontoglires</taxon>
        <taxon>Glires</taxon>
        <taxon>Rodentia</taxon>
        <taxon>Myomorpha</taxon>
        <taxon>Muroidea</taxon>
        <taxon>Cricetidae</taxon>
        <taxon>Arvicolinae</taxon>
        <taxon>Myodes</taxon>
    </lineage>
</organism>
<accession>P0DUX5</accession>
<keyword id="KW-0445">Lipid transport</keyword>
<keyword id="KW-0964">Secreted</keyword>
<keyword id="KW-0732">Signal</keyword>
<keyword id="KW-0813">Transport</keyword>
<keyword id="KW-0850">VLDL</keyword>
<proteinExistence type="inferred from homology"/>
<comment type="function">
    <text evidence="1 2 3">Inhibitor of lipoprotein binding to the low density lipoprotein (LDL) receptor, LDL receptor-related protein, and very low density lipoprotein (VLDL) receptor. Associates with high density lipoproteins (HDL) and the triacylglycerol-rich lipoproteins in the plasma and makes up about 10% of the protein of the VLDL and 2% of that of HDL. Appears to interfere directly with fatty acid uptake and is also the major plasma inhibitor of cholesteryl ester transfer protein (CETP). Modulates the interaction of APOE with beta-migrating VLDL and inhibits binding of beta-VLDL to the LDL receptor-related protein (By similarity). Binds free fatty acids and reduces their intracellular esterification (By similarity).</text>
</comment>
<comment type="subcellular location">
    <subcellularLocation>
        <location evidence="1">Secreted</location>
    </subcellularLocation>
</comment>
<comment type="similarity">
    <text evidence="6">Belongs to the apolipoprotein C1 family.</text>
</comment>
<reference key="1">
    <citation type="submission" date="2017-09" db="EMBL/GenBank/DDBJ databases">
        <title>Signatures of selection in the bank vole genome.</title>
        <authorList>
            <person name="Lundberg M."/>
        </authorList>
    </citation>
    <scope>NUCLEOTIDE SEQUENCE [LARGE SCALE GENOMIC DNA]</scope>
    <source>
        <tissue>Spleen</tissue>
    </source>
</reference>
<reference key="2">
    <citation type="unpublished observations" date="2021-07">
        <authorList>
            <person name="Puppione D.L."/>
        </authorList>
    </citation>
    <scope>IDENTIFICATION</scope>
</reference>
<feature type="signal peptide" evidence="5">
    <location>
        <begin position="1"/>
        <end position="26"/>
    </location>
</feature>
<feature type="chain" id="PRO_0000453988" description="Apolipoprotein C-I">
    <location>
        <begin position="27"/>
        <end position="88"/>
    </location>
</feature>
<feature type="chain" id="PRO_0000453989" description="Truncated apolipoprotein C-I" evidence="4">
    <location>
        <begin position="29"/>
        <end position="88"/>
    </location>
</feature>
<protein>
    <recommendedName>
        <fullName>Apolipoprotein C-I</fullName>
        <shortName>Apo-CI</shortName>
        <shortName>ApoC-I</shortName>
    </recommendedName>
    <alternativeName>
        <fullName>Apolipoprotein C1</fullName>
    </alternativeName>
    <component>
        <recommendedName>
            <fullName>Truncated apolipoprotein C-I</fullName>
        </recommendedName>
    </component>
</protein>